<name>PSBD_CITSI</name>
<gene>
    <name evidence="2" type="primary">psbD</name>
</gene>
<feature type="initiator methionine" description="Removed" evidence="1">
    <location>
        <position position="1"/>
    </location>
</feature>
<feature type="chain" id="PRO_0000359636" description="Photosystem II D2 protein">
    <location>
        <begin position="2"/>
        <end position="353"/>
    </location>
</feature>
<feature type="transmembrane region" description="Helical" evidence="2">
    <location>
        <begin position="41"/>
        <end position="61"/>
    </location>
</feature>
<feature type="transmembrane region" description="Helical" evidence="2">
    <location>
        <begin position="125"/>
        <end position="141"/>
    </location>
</feature>
<feature type="transmembrane region" description="Helical" evidence="2">
    <location>
        <begin position="153"/>
        <end position="166"/>
    </location>
</feature>
<feature type="transmembrane region" description="Helical" evidence="2">
    <location>
        <begin position="208"/>
        <end position="228"/>
    </location>
</feature>
<feature type="transmembrane region" description="Helical" evidence="2">
    <location>
        <begin position="279"/>
        <end position="295"/>
    </location>
</feature>
<feature type="binding site" description="axial binding residue" evidence="2">
    <location>
        <position position="118"/>
    </location>
    <ligand>
        <name>chlorophyll a</name>
        <dbReference type="ChEBI" id="CHEBI:58416"/>
        <label>ChlzD2</label>
    </ligand>
    <ligandPart>
        <name>Mg</name>
        <dbReference type="ChEBI" id="CHEBI:25107"/>
    </ligandPart>
</feature>
<feature type="binding site" evidence="2">
    <location>
        <position position="130"/>
    </location>
    <ligand>
        <name>pheophytin a</name>
        <dbReference type="ChEBI" id="CHEBI:136840"/>
        <label>D2</label>
    </ligand>
</feature>
<feature type="binding site" evidence="2">
    <location>
        <position position="143"/>
    </location>
    <ligand>
        <name>pheophytin a</name>
        <dbReference type="ChEBI" id="CHEBI:136840"/>
        <label>D2</label>
    </ligand>
</feature>
<feature type="binding site" description="axial binding residue" evidence="2">
    <location>
        <position position="198"/>
    </location>
    <ligand>
        <name>chlorophyll a</name>
        <dbReference type="ChEBI" id="CHEBI:58416"/>
        <label>PD2</label>
    </ligand>
    <ligandPart>
        <name>Mg</name>
        <dbReference type="ChEBI" id="CHEBI:25107"/>
    </ligandPart>
</feature>
<feature type="binding site" evidence="2">
    <location>
        <position position="215"/>
    </location>
    <ligand>
        <name>a plastoquinone</name>
        <dbReference type="ChEBI" id="CHEBI:17757"/>
        <label>Q(A)</label>
    </ligand>
</feature>
<feature type="binding site" evidence="2">
    <location>
        <position position="215"/>
    </location>
    <ligand>
        <name>Fe cation</name>
        <dbReference type="ChEBI" id="CHEBI:24875"/>
        <note>ligand shared with heterodimeric partner</note>
    </ligand>
</feature>
<feature type="binding site" evidence="2">
    <location>
        <position position="262"/>
    </location>
    <ligand>
        <name>a plastoquinone</name>
        <dbReference type="ChEBI" id="CHEBI:17757"/>
        <label>Q(A)</label>
    </ligand>
</feature>
<feature type="binding site" evidence="2">
    <location>
        <position position="269"/>
    </location>
    <ligand>
        <name>Fe cation</name>
        <dbReference type="ChEBI" id="CHEBI:24875"/>
        <note>ligand shared with heterodimeric partner</note>
    </ligand>
</feature>
<feature type="modified residue" description="N-acetylthreonine" evidence="1">
    <location>
        <position position="2"/>
    </location>
</feature>
<feature type="modified residue" description="Phosphothreonine" evidence="1">
    <location>
        <position position="2"/>
    </location>
</feature>
<accession>Q09MI3</accession>
<reference key="1">
    <citation type="journal article" date="2006" name="BMC Plant Biol.">
        <title>The complete chloroplast genome sequence of Citrus sinensis (L.) Osbeck var 'Ridge Pineapple': organization and phylogenetic relationships to other angiosperms.</title>
        <authorList>
            <person name="Bausher M.G."/>
            <person name="Singh N.D."/>
            <person name="Lee S.-B."/>
            <person name="Jansen R.K."/>
            <person name="Daniell H."/>
        </authorList>
    </citation>
    <scope>NUCLEOTIDE SEQUENCE [LARGE SCALE GENOMIC DNA]</scope>
    <source>
        <strain>cv. Osbeck var. Ridge Pineapple</strain>
    </source>
</reference>
<evidence type="ECO:0000250" key="1">
    <source>
        <dbReference type="UniProtKB" id="P56761"/>
    </source>
</evidence>
<evidence type="ECO:0000255" key="2">
    <source>
        <dbReference type="HAMAP-Rule" id="MF_01383"/>
    </source>
</evidence>
<dbReference type="EC" id="1.10.3.9" evidence="2"/>
<dbReference type="EMBL" id="DQ864733">
    <property type="protein sequence ID" value="ABI49015.1"/>
    <property type="molecule type" value="Genomic_DNA"/>
</dbReference>
<dbReference type="RefSeq" id="YP_740470.1">
    <property type="nucleotide sequence ID" value="NC_008334.1"/>
</dbReference>
<dbReference type="SMR" id="Q09MI3"/>
<dbReference type="GeneID" id="4271200"/>
<dbReference type="KEGG" id="cit:4271200"/>
<dbReference type="OrthoDB" id="926476at71240"/>
<dbReference type="GO" id="GO:0009535">
    <property type="term" value="C:chloroplast thylakoid membrane"/>
    <property type="evidence" value="ECO:0007669"/>
    <property type="project" value="UniProtKB-SubCell"/>
</dbReference>
<dbReference type="GO" id="GO:0009523">
    <property type="term" value="C:photosystem II"/>
    <property type="evidence" value="ECO:0007669"/>
    <property type="project" value="UniProtKB-KW"/>
</dbReference>
<dbReference type="GO" id="GO:0016168">
    <property type="term" value="F:chlorophyll binding"/>
    <property type="evidence" value="ECO:0007669"/>
    <property type="project" value="UniProtKB-UniRule"/>
</dbReference>
<dbReference type="GO" id="GO:0045156">
    <property type="term" value="F:electron transporter, transferring electrons within the cyclic electron transport pathway of photosynthesis activity"/>
    <property type="evidence" value="ECO:0007669"/>
    <property type="project" value="InterPro"/>
</dbReference>
<dbReference type="GO" id="GO:0005506">
    <property type="term" value="F:iron ion binding"/>
    <property type="evidence" value="ECO:0007669"/>
    <property type="project" value="UniProtKB-UniRule"/>
</dbReference>
<dbReference type="GO" id="GO:0010242">
    <property type="term" value="F:oxygen evolving activity"/>
    <property type="evidence" value="ECO:0007669"/>
    <property type="project" value="UniProtKB-EC"/>
</dbReference>
<dbReference type="GO" id="GO:0009772">
    <property type="term" value="P:photosynthetic electron transport in photosystem II"/>
    <property type="evidence" value="ECO:0007669"/>
    <property type="project" value="InterPro"/>
</dbReference>
<dbReference type="CDD" id="cd09288">
    <property type="entry name" value="Photosystem-II_D2"/>
    <property type="match status" value="1"/>
</dbReference>
<dbReference type="FunFam" id="1.20.85.10:FF:000001">
    <property type="entry name" value="photosystem II D2 protein-like"/>
    <property type="match status" value="1"/>
</dbReference>
<dbReference type="Gene3D" id="1.20.85.10">
    <property type="entry name" value="Photosystem II protein D1-like"/>
    <property type="match status" value="1"/>
</dbReference>
<dbReference type="HAMAP" id="MF_01383">
    <property type="entry name" value="PSII_PsbD_D2"/>
    <property type="match status" value="1"/>
</dbReference>
<dbReference type="InterPro" id="IPR055266">
    <property type="entry name" value="D1/D2"/>
</dbReference>
<dbReference type="InterPro" id="IPR036854">
    <property type="entry name" value="Photo_II_D1/D2_sf"/>
</dbReference>
<dbReference type="InterPro" id="IPR000484">
    <property type="entry name" value="Photo_RC_L/M"/>
</dbReference>
<dbReference type="InterPro" id="IPR055265">
    <property type="entry name" value="Photo_RC_L/M_CS"/>
</dbReference>
<dbReference type="InterPro" id="IPR005868">
    <property type="entry name" value="PSII_PsbD/D2"/>
</dbReference>
<dbReference type="NCBIfam" id="TIGR01152">
    <property type="entry name" value="psbD"/>
    <property type="match status" value="1"/>
</dbReference>
<dbReference type="PANTHER" id="PTHR33149:SF57">
    <property type="entry name" value="PHOTOSYSTEM II D2 PROTEIN"/>
    <property type="match status" value="1"/>
</dbReference>
<dbReference type="PANTHER" id="PTHR33149">
    <property type="entry name" value="PHOTOSYSTEM II PROTEIN D1"/>
    <property type="match status" value="1"/>
</dbReference>
<dbReference type="Pfam" id="PF00124">
    <property type="entry name" value="Photo_RC"/>
    <property type="match status" value="1"/>
</dbReference>
<dbReference type="PRINTS" id="PR00256">
    <property type="entry name" value="REACTNCENTRE"/>
</dbReference>
<dbReference type="SUPFAM" id="SSF81483">
    <property type="entry name" value="Bacterial photosystem II reaction centre, L and M subunits"/>
    <property type="match status" value="1"/>
</dbReference>
<dbReference type="PROSITE" id="PS00244">
    <property type="entry name" value="REACTION_CENTER"/>
    <property type="match status" value="1"/>
</dbReference>
<protein>
    <recommendedName>
        <fullName evidence="2">Photosystem II D2 protein</fullName>
        <shortName evidence="2">PSII D2 protein</shortName>
        <ecNumber evidence="2">1.10.3.9</ecNumber>
    </recommendedName>
    <alternativeName>
        <fullName evidence="2">Photosystem Q(A) protein</fullName>
    </alternativeName>
</protein>
<proteinExistence type="inferred from homology"/>
<geneLocation type="chloroplast"/>
<sequence>MTIALGKFTKEEKDLFDIMDDWLRRDRFVFVGWSGLLLFPCAYFALGGWFTGTTFVTSWYTHGLASSYLEGCNFLTAAVSTPANSLAHSLLLLWGPEAQGDFTRWCQLGGLWTFVALHGAFGLIGFMLRQFELARSVQLRPYNAIAFSAPIAVFVSVFLIYPLGQSGWFFAPSFGVAAIFRFILFFQGFHNWTLNPFHMMGVAGVLGAALLCAIHGATVENTLFEDGDGANTFRAFNPTQAEETYSMVTANRFWSQIFGVAFSNKRWLHFFMLFVPVTGLWMSALGVVGLALNLRAYDFVSQEIRAAEDPEFETFYTKNILLNEGIRAWMAAQDQPHENLIFPEEVLPRGNAL</sequence>
<organism>
    <name type="scientific">Citrus sinensis</name>
    <name type="common">Sweet orange</name>
    <name type="synonym">Citrus aurantium var. sinensis</name>
    <dbReference type="NCBI Taxonomy" id="2711"/>
    <lineage>
        <taxon>Eukaryota</taxon>
        <taxon>Viridiplantae</taxon>
        <taxon>Streptophyta</taxon>
        <taxon>Embryophyta</taxon>
        <taxon>Tracheophyta</taxon>
        <taxon>Spermatophyta</taxon>
        <taxon>Magnoliopsida</taxon>
        <taxon>eudicotyledons</taxon>
        <taxon>Gunneridae</taxon>
        <taxon>Pentapetalae</taxon>
        <taxon>rosids</taxon>
        <taxon>malvids</taxon>
        <taxon>Sapindales</taxon>
        <taxon>Rutaceae</taxon>
        <taxon>Aurantioideae</taxon>
        <taxon>Citrus</taxon>
    </lineage>
</organism>
<keyword id="KW-0007">Acetylation</keyword>
<keyword id="KW-0148">Chlorophyll</keyword>
<keyword id="KW-0150">Chloroplast</keyword>
<keyword id="KW-0157">Chromophore</keyword>
<keyword id="KW-0249">Electron transport</keyword>
<keyword id="KW-0408">Iron</keyword>
<keyword id="KW-0460">Magnesium</keyword>
<keyword id="KW-0472">Membrane</keyword>
<keyword id="KW-0479">Metal-binding</keyword>
<keyword id="KW-0560">Oxidoreductase</keyword>
<keyword id="KW-0597">Phosphoprotein</keyword>
<keyword id="KW-0602">Photosynthesis</keyword>
<keyword id="KW-0604">Photosystem II</keyword>
<keyword id="KW-0934">Plastid</keyword>
<keyword id="KW-0793">Thylakoid</keyword>
<keyword id="KW-0812">Transmembrane</keyword>
<keyword id="KW-1133">Transmembrane helix</keyword>
<keyword id="KW-0813">Transport</keyword>
<comment type="function">
    <text evidence="2">Photosystem II (PSII) is a light-driven water:plastoquinone oxidoreductase that uses light energy to abstract electrons from H(2)O, generating O(2) and a proton gradient subsequently used for ATP formation. It consists of a core antenna complex that captures photons, and an electron transfer chain that converts photonic excitation into a charge separation. The D1/D2 (PsbA/PsbD) reaction center heterodimer binds P680, the primary electron donor of PSII as well as several subsequent electron acceptors. D2 is needed for assembly of a stable PSII complex.</text>
</comment>
<comment type="catalytic activity">
    <reaction evidence="2">
        <text>2 a plastoquinone + 4 hnu + 2 H2O = 2 a plastoquinol + O2</text>
        <dbReference type="Rhea" id="RHEA:36359"/>
        <dbReference type="Rhea" id="RHEA-COMP:9561"/>
        <dbReference type="Rhea" id="RHEA-COMP:9562"/>
        <dbReference type="ChEBI" id="CHEBI:15377"/>
        <dbReference type="ChEBI" id="CHEBI:15379"/>
        <dbReference type="ChEBI" id="CHEBI:17757"/>
        <dbReference type="ChEBI" id="CHEBI:30212"/>
        <dbReference type="ChEBI" id="CHEBI:62192"/>
        <dbReference type="EC" id="1.10.3.9"/>
    </reaction>
</comment>
<comment type="cofactor">
    <text evidence="2">The D1/D2 heterodimer binds P680, chlorophylls that are the primary electron donor of PSII, and subsequent electron acceptors. It shares a non-heme iron and each subunit binds pheophytin, quinone, additional chlorophylls, carotenoids and lipids. There is also a Cl(-1) ion associated with D1 and D2, which is required for oxygen evolution. The PSII complex binds additional chlorophylls, carotenoids and specific lipids.</text>
</comment>
<comment type="subunit">
    <text evidence="2">PSII is composed of 1 copy each of membrane proteins PsbA, PsbB, PsbC, PsbD, PsbE, PsbF, PsbH, PsbI, PsbJ, PsbK, PsbL, PsbM, PsbT, PsbX, PsbY, PsbZ, Psb30/Ycf12, at least 3 peripheral proteins of the oxygen-evolving complex and a large number of cofactors. It forms dimeric complexes.</text>
</comment>
<comment type="subcellular location">
    <subcellularLocation>
        <location evidence="2">Plastid</location>
        <location evidence="2">Chloroplast thylakoid membrane</location>
        <topology evidence="2">Multi-pass membrane protein</topology>
    </subcellularLocation>
</comment>
<comment type="miscellaneous">
    <text evidence="2">2 of the reaction center chlorophylls (ChlD1 and ChlD2) are entirely coordinated by water.</text>
</comment>
<comment type="similarity">
    <text evidence="2">Belongs to the reaction center PufL/M/PsbA/D family.</text>
</comment>